<dbReference type="EC" id="1.1.99.1" evidence="1"/>
<dbReference type="EC" id="1.2.1.8" evidence="1"/>
<dbReference type="EMBL" id="CP000802">
    <property type="protein sequence ID" value="ABV04758.1"/>
    <property type="molecule type" value="Genomic_DNA"/>
</dbReference>
<dbReference type="RefSeq" id="WP_001159102.1">
    <property type="nucleotide sequence ID" value="NC_009800.1"/>
</dbReference>
<dbReference type="SMR" id="A7ZWV4"/>
<dbReference type="GeneID" id="75206487"/>
<dbReference type="KEGG" id="ecx:EcHS_A0370"/>
<dbReference type="HOGENOM" id="CLU_002865_7_1_6"/>
<dbReference type="UniPathway" id="UPA00529">
    <property type="reaction ID" value="UER00385"/>
</dbReference>
<dbReference type="GO" id="GO:0016020">
    <property type="term" value="C:membrane"/>
    <property type="evidence" value="ECO:0007669"/>
    <property type="project" value="TreeGrafter"/>
</dbReference>
<dbReference type="GO" id="GO:0008802">
    <property type="term" value="F:betaine-aldehyde dehydrogenase (NAD+) activity"/>
    <property type="evidence" value="ECO:0007669"/>
    <property type="project" value="UniProtKB-EC"/>
</dbReference>
<dbReference type="GO" id="GO:0008812">
    <property type="term" value="F:choline dehydrogenase activity"/>
    <property type="evidence" value="ECO:0007669"/>
    <property type="project" value="UniProtKB-UniRule"/>
</dbReference>
<dbReference type="GO" id="GO:0050660">
    <property type="term" value="F:flavin adenine dinucleotide binding"/>
    <property type="evidence" value="ECO:0007669"/>
    <property type="project" value="InterPro"/>
</dbReference>
<dbReference type="GO" id="GO:0019285">
    <property type="term" value="P:glycine betaine biosynthetic process from choline"/>
    <property type="evidence" value="ECO:0007669"/>
    <property type="project" value="UniProtKB-UniRule"/>
</dbReference>
<dbReference type="Gene3D" id="3.50.50.60">
    <property type="entry name" value="FAD/NAD(P)-binding domain"/>
    <property type="match status" value="1"/>
</dbReference>
<dbReference type="Gene3D" id="3.30.560.10">
    <property type="entry name" value="Glucose Oxidase, domain 3"/>
    <property type="match status" value="1"/>
</dbReference>
<dbReference type="HAMAP" id="MF_00750">
    <property type="entry name" value="Choline_dehydrogen"/>
    <property type="match status" value="1"/>
</dbReference>
<dbReference type="InterPro" id="IPR011533">
    <property type="entry name" value="BetA"/>
</dbReference>
<dbReference type="InterPro" id="IPR036188">
    <property type="entry name" value="FAD/NAD-bd_sf"/>
</dbReference>
<dbReference type="InterPro" id="IPR012132">
    <property type="entry name" value="GMC_OxRdtase"/>
</dbReference>
<dbReference type="InterPro" id="IPR000172">
    <property type="entry name" value="GMC_OxRdtase_N"/>
</dbReference>
<dbReference type="InterPro" id="IPR007867">
    <property type="entry name" value="GMC_OxRtase_C"/>
</dbReference>
<dbReference type="NCBIfam" id="TIGR01810">
    <property type="entry name" value="betA"/>
    <property type="match status" value="1"/>
</dbReference>
<dbReference type="NCBIfam" id="NF002550">
    <property type="entry name" value="PRK02106.1"/>
    <property type="match status" value="1"/>
</dbReference>
<dbReference type="PANTHER" id="PTHR11552:SF147">
    <property type="entry name" value="CHOLINE DEHYDROGENASE, MITOCHONDRIAL"/>
    <property type="match status" value="1"/>
</dbReference>
<dbReference type="PANTHER" id="PTHR11552">
    <property type="entry name" value="GLUCOSE-METHANOL-CHOLINE GMC OXIDOREDUCTASE"/>
    <property type="match status" value="1"/>
</dbReference>
<dbReference type="Pfam" id="PF05199">
    <property type="entry name" value="GMC_oxred_C"/>
    <property type="match status" value="1"/>
</dbReference>
<dbReference type="Pfam" id="PF00732">
    <property type="entry name" value="GMC_oxred_N"/>
    <property type="match status" value="1"/>
</dbReference>
<dbReference type="PIRSF" id="PIRSF000137">
    <property type="entry name" value="Alcohol_oxidase"/>
    <property type="match status" value="1"/>
</dbReference>
<dbReference type="SUPFAM" id="SSF54373">
    <property type="entry name" value="FAD-linked reductases, C-terminal domain"/>
    <property type="match status" value="1"/>
</dbReference>
<dbReference type="SUPFAM" id="SSF51905">
    <property type="entry name" value="FAD/NAD(P)-binding domain"/>
    <property type="match status" value="1"/>
</dbReference>
<dbReference type="PROSITE" id="PS00623">
    <property type="entry name" value="GMC_OXRED_1"/>
    <property type="match status" value="1"/>
</dbReference>
<dbReference type="PROSITE" id="PS00624">
    <property type="entry name" value="GMC_OXRED_2"/>
    <property type="match status" value="1"/>
</dbReference>
<accession>A7ZWV4</accession>
<reference key="1">
    <citation type="journal article" date="2008" name="J. Bacteriol.">
        <title>The pangenome structure of Escherichia coli: comparative genomic analysis of E. coli commensal and pathogenic isolates.</title>
        <authorList>
            <person name="Rasko D.A."/>
            <person name="Rosovitz M.J."/>
            <person name="Myers G.S.A."/>
            <person name="Mongodin E.F."/>
            <person name="Fricke W.F."/>
            <person name="Gajer P."/>
            <person name="Crabtree J."/>
            <person name="Sebaihia M."/>
            <person name="Thomson N.R."/>
            <person name="Chaudhuri R."/>
            <person name="Henderson I.R."/>
            <person name="Sperandio V."/>
            <person name="Ravel J."/>
        </authorList>
    </citation>
    <scope>NUCLEOTIDE SEQUENCE [LARGE SCALE GENOMIC DNA]</scope>
    <source>
        <strain>HS</strain>
    </source>
</reference>
<evidence type="ECO:0000255" key="1">
    <source>
        <dbReference type="HAMAP-Rule" id="MF_00750"/>
    </source>
</evidence>
<protein>
    <recommendedName>
        <fullName evidence="1">Oxygen-dependent choline dehydrogenase</fullName>
        <shortName evidence="1">CDH</shortName>
        <shortName evidence="1">CHD</shortName>
        <ecNumber evidence="1">1.1.99.1</ecNumber>
    </recommendedName>
    <alternativeName>
        <fullName evidence="1">Betaine aldehyde dehydrogenase</fullName>
        <shortName evidence="1">BADH</shortName>
        <ecNumber evidence="1">1.2.1.8</ecNumber>
    </alternativeName>
</protein>
<organism>
    <name type="scientific">Escherichia coli O9:H4 (strain HS)</name>
    <dbReference type="NCBI Taxonomy" id="331112"/>
    <lineage>
        <taxon>Bacteria</taxon>
        <taxon>Pseudomonadati</taxon>
        <taxon>Pseudomonadota</taxon>
        <taxon>Gammaproteobacteria</taxon>
        <taxon>Enterobacterales</taxon>
        <taxon>Enterobacteriaceae</taxon>
        <taxon>Escherichia</taxon>
    </lineage>
</organism>
<sequence length="556" mass="61848">MQFDYIIIGAGSAGNVLATRLTEDPNTSVLLLEAGGPDYRFDFRTQMPAALAFPLQGKRYNWAYETEPEPFMNNRRMECGRGKGLGGSSLINGMCYIRGNALDLDNWAQEPGLENWSYLDCLPYYRKAETRDVGENDYHGGDGPVSVTTSKPGVNPLFEAMIEAGVQAGYPRTDDLNGYQQEGFGPMDRTVTPQGRRASTARGYLDQAKSRPNLTIRTHAMTDHIIFDGKRAVGVEWLEGDSTIPTRATANKEVLLCAGAIASPQILQRSGVGNAELLAEFDIPLVHELPGVGENLQDHLEMYLQYECKEPVSLYPALQWWNQPKIGAEWLFGGTGVGASNHFEAGGFIRSREEFAWPNIQYHFLPVAINYNGSNAVKEHGFQCHVGSMRSPSRGHVRIKSRDPHQHPAILFNYMSHEQDWQEFRDAIRITREIMHQPALDQYRGREISPGTECQTDEQLDEFVRNHAETAFHPCGTCKMGYDEMSVVDGEGRVHGLEGLRVVDASIMPQIITGNLNATTIMIGEKIADMIRGQEALPRSTAGYFVANGMPVRAKK</sequence>
<proteinExistence type="inferred from homology"/>
<gene>
    <name evidence="1" type="primary">betA</name>
    <name type="ordered locus">EcHS_A0370</name>
</gene>
<name>BETA_ECOHS</name>
<feature type="chain" id="PRO_1000062187" description="Oxygen-dependent choline dehydrogenase">
    <location>
        <begin position="1"/>
        <end position="556"/>
    </location>
</feature>
<feature type="active site" description="Proton acceptor" evidence="1">
    <location>
        <position position="473"/>
    </location>
</feature>
<feature type="binding site" evidence="1">
    <location>
        <begin position="4"/>
        <end position="33"/>
    </location>
    <ligand>
        <name>FAD</name>
        <dbReference type="ChEBI" id="CHEBI:57692"/>
    </ligand>
</feature>
<comment type="function">
    <text evidence="1">Involved in the biosynthesis of the osmoprotectant glycine betaine. Catalyzes the oxidation of choline to betaine aldehyde and betaine aldehyde to glycine betaine at the same rate.</text>
</comment>
<comment type="catalytic activity">
    <reaction evidence="1">
        <text>choline + A = betaine aldehyde + AH2</text>
        <dbReference type="Rhea" id="RHEA:17433"/>
        <dbReference type="ChEBI" id="CHEBI:13193"/>
        <dbReference type="ChEBI" id="CHEBI:15354"/>
        <dbReference type="ChEBI" id="CHEBI:15710"/>
        <dbReference type="ChEBI" id="CHEBI:17499"/>
        <dbReference type="EC" id="1.1.99.1"/>
    </reaction>
</comment>
<comment type="catalytic activity">
    <reaction evidence="1">
        <text>betaine aldehyde + NAD(+) + H2O = glycine betaine + NADH + 2 H(+)</text>
        <dbReference type="Rhea" id="RHEA:15305"/>
        <dbReference type="ChEBI" id="CHEBI:15377"/>
        <dbReference type="ChEBI" id="CHEBI:15378"/>
        <dbReference type="ChEBI" id="CHEBI:15710"/>
        <dbReference type="ChEBI" id="CHEBI:17750"/>
        <dbReference type="ChEBI" id="CHEBI:57540"/>
        <dbReference type="ChEBI" id="CHEBI:57945"/>
        <dbReference type="EC" id="1.2.1.8"/>
    </reaction>
</comment>
<comment type="cofactor">
    <cofactor evidence="1">
        <name>FAD</name>
        <dbReference type="ChEBI" id="CHEBI:57692"/>
    </cofactor>
</comment>
<comment type="pathway">
    <text evidence="1">Amine and polyamine biosynthesis; betaine biosynthesis via choline pathway; betaine aldehyde from choline (cytochrome c reductase route): step 1/1.</text>
</comment>
<comment type="similarity">
    <text evidence="1">Belongs to the GMC oxidoreductase family.</text>
</comment>
<keyword id="KW-0274">FAD</keyword>
<keyword id="KW-0285">Flavoprotein</keyword>
<keyword id="KW-0520">NAD</keyword>
<keyword id="KW-0560">Oxidoreductase</keyword>